<reference key="1">
    <citation type="submission" date="2008-10" db="EMBL/GenBank/DDBJ databases">
        <title>The complete genome sequence of Helicobacter pylori strain P12.</title>
        <authorList>
            <person name="Fischer W."/>
            <person name="Windhager L."/>
            <person name="Karnholz A."/>
            <person name="Zeiller M."/>
            <person name="Zimmer R."/>
            <person name="Haas R."/>
        </authorList>
    </citation>
    <scope>NUCLEOTIDE SEQUENCE [LARGE SCALE GENOMIC DNA]</scope>
    <source>
        <strain>P12</strain>
    </source>
</reference>
<keyword id="KW-0963">Cytoplasm</keyword>
<keyword id="KW-0648">Protein biosynthesis</keyword>
<evidence type="ECO:0000255" key="1">
    <source>
        <dbReference type="HAMAP-Rule" id="MF_00040"/>
    </source>
</evidence>
<evidence type="ECO:0000256" key="2">
    <source>
        <dbReference type="SAM" id="MobiDB-lite"/>
    </source>
</evidence>
<name>RRF_HELP2</name>
<organism>
    <name type="scientific">Helicobacter pylori (strain P12)</name>
    <dbReference type="NCBI Taxonomy" id="570508"/>
    <lineage>
        <taxon>Bacteria</taxon>
        <taxon>Pseudomonadati</taxon>
        <taxon>Campylobacterota</taxon>
        <taxon>Epsilonproteobacteria</taxon>
        <taxon>Campylobacterales</taxon>
        <taxon>Helicobacteraceae</taxon>
        <taxon>Helicobacter</taxon>
    </lineage>
</organism>
<dbReference type="EMBL" id="CP001217">
    <property type="protein sequence ID" value="ACJ08374.1"/>
    <property type="molecule type" value="Genomic_DNA"/>
</dbReference>
<dbReference type="SMR" id="B6JN96"/>
<dbReference type="KEGG" id="hpp:HPP12_1222"/>
<dbReference type="HOGENOM" id="CLU_073981_2_0_7"/>
<dbReference type="Proteomes" id="UP000008198">
    <property type="component" value="Chromosome"/>
</dbReference>
<dbReference type="GO" id="GO:0005829">
    <property type="term" value="C:cytosol"/>
    <property type="evidence" value="ECO:0007669"/>
    <property type="project" value="GOC"/>
</dbReference>
<dbReference type="GO" id="GO:0043023">
    <property type="term" value="F:ribosomal large subunit binding"/>
    <property type="evidence" value="ECO:0007669"/>
    <property type="project" value="TreeGrafter"/>
</dbReference>
<dbReference type="GO" id="GO:0002184">
    <property type="term" value="P:cytoplasmic translational termination"/>
    <property type="evidence" value="ECO:0007669"/>
    <property type="project" value="TreeGrafter"/>
</dbReference>
<dbReference type="CDD" id="cd00520">
    <property type="entry name" value="RRF"/>
    <property type="match status" value="1"/>
</dbReference>
<dbReference type="FunFam" id="1.10.132.20:FF:000001">
    <property type="entry name" value="Ribosome-recycling factor"/>
    <property type="match status" value="1"/>
</dbReference>
<dbReference type="FunFam" id="3.30.1360.40:FF:000001">
    <property type="entry name" value="Ribosome-recycling factor"/>
    <property type="match status" value="1"/>
</dbReference>
<dbReference type="Gene3D" id="3.30.1360.40">
    <property type="match status" value="1"/>
</dbReference>
<dbReference type="Gene3D" id="1.10.132.20">
    <property type="entry name" value="Ribosome-recycling factor"/>
    <property type="match status" value="1"/>
</dbReference>
<dbReference type="HAMAP" id="MF_00040">
    <property type="entry name" value="RRF"/>
    <property type="match status" value="1"/>
</dbReference>
<dbReference type="InterPro" id="IPR002661">
    <property type="entry name" value="Ribosome_recyc_fac"/>
</dbReference>
<dbReference type="InterPro" id="IPR023584">
    <property type="entry name" value="Ribosome_recyc_fac_dom"/>
</dbReference>
<dbReference type="InterPro" id="IPR036191">
    <property type="entry name" value="RRF_sf"/>
</dbReference>
<dbReference type="NCBIfam" id="TIGR00496">
    <property type="entry name" value="frr"/>
    <property type="match status" value="1"/>
</dbReference>
<dbReference type="PANTHER" id="PTHR20982:SF3">
    <property type="entry name" value="MITOCHONDRIAL RIBOSOME RECYCLING FACTOR PSEUDO 1"/>
    <property type="match status" value="1"/>
</dbReference>
<dbReference type="PANTHER" id="PTHR20982">
    <property type="entry name" value="RIBOSOME RECYCLING FACTOR"/>
    <property type="match status" value="1"/>
</dbReference>
<dbReference type="Pfam" id="PF01765">
    <property type="entry name" value="RRF"/>
    <property type="match status" value="1"/>
</dbReference>
<dbReference type="SUPFAM" id="SSF55194">
    <property type="entry name" value="Ribosome recycling factor, RRF"/>
    <property type="match status" value="1"/>
</dbReference>
<accession>B6JN96</accession>
<gene>
    <name evidence="1" type="primary">frr</name>
    <name type="ordered locus">HPP12_1222</name>
</gene>
<comment type="function">
    <text evidence="1">Responsible for the release of ribosomes from messenger RNA at the termination of protein biosynthesis. May increase the efficiency of translation by recycling ribosomes from one round of translation to another.</text>
</comment>
<comment type="subcellular location">
    <subcellularLocation>
        <location evidence="1">Cytoplasm</location>
    </subcellularLocation>
</comment>
<comment type="similarity">
    <text evidence="1">Belongs to the RRF family.</text>
</comment>
<protein>
    <recommendedName>
        <fullName evidence="1">Ribosome-recycling factor</fullName>
        <shortName evidence="1">RRF</shortName>
    </recommendedName>
    <alternativeName>
        <fullName evidence="1">Ribosome-releasing factor</fullName>
    </alternativeName>
</protein>
<feature type="chain" id="PRO_1000090748" description="Ribosome-recycling factor">
    <location>
        <begin position="1"/>
        <end position="185"/>
    </location>
</feature>
<feature type="region of interest" description="Disordered" evidence="2">
    <location>
        <begin position="137"/>
        <end position="158"/>
    </location>
</feature>
<feature type="compositionally biased region" description="Basic and acidic residues" evidence="2">
    <location>
        <begin position="140"/>
        <end position="158"/>
    </location>
</feature>
<proteinExistence type="inferred from homology"/>
<sequence length="185" mass="20915">MLQAIYNETKDLMQKSIQALNRDFSTLRSAKVSVNILDHIKVDYYGTPTALNQVGSVMSLDATTLQISPWEKNLLKEIERSIQEANIGVNPNNDGETIKLFFPPMTSEQRKLIAKDAKAMGEKAKVAVRNIRQDANNQVKKLEKDKEISEDESKKAQEQIQKITDEAIKKIDESVKNKEDAILKV</sequence>